<dbReference type="EMBL" id="AF375192">
    <property type="protein sequence ID" value="AAM19364.1"/>
    <property type="molecule type" value="Genomic_DNA"/>
</dbReference>
<dbReference type="GO" id="GO:0009507">
    <property type="term" value="C:chloroplast"/>
    <property type="evidence" value="ECO:0007669"/>
    <property type="project" value="UniProtKB-SubCell"/>
</dbReference>
<dbReference type="GO" id="GO:0003723">
    <property type="term" value="F:RNA binding"/>
    <property type="evidence" value="ECO:0007669"/>
    <property type="project" value="UniProtKB-KW"/>
</dbReference>
<dbReference type="GO" id="GO:0006397">
    <property type="term" value="P:mRNA processing"/>
    <property type="evidence" value="ECO:0007669"/>
    <property type="project" value="UniProtKB-KW"/>
</dbReference>
<dbReference type="GO" id="GO:0008380">
    <property type="term" value="P:RNA splicing"/>
    <property type="evidence" value="ECO:0007669"/>
    <property type="project" value="UniProtKB-UniRule"/>
</dbReference>
<dbReference type="GO" id="GO:0008033">
    <property type="term" value="P:tRNA processing"/>
    <property type="evidence" value="ECO:0007669"/>
    <property type="project" value="UniProtKB-KW"/>
</dbReference>
<dbReference type="HAMAP" id="MF_01390">
    <property type="entry name" value="MatK"/>
    <property type="match status" value="1"/>
</dbReference>
<dbReference type="InterPro" id="IPR024937">
    <property type="entry name" value="Domain_X"/>
</dbReference>
<dbReference type="InterPro" id="IPR002866">
    <property type="entry name" value="Maturase_MatK"/>
</dbReference>
<dbReference type="InterPro" id="IPR024942">
    <property type="entry name" value="Maturase_MatK_N"/>
</dbReference>
<dbReference type="PANTHER" id="PTHR34811">
    <property type="entry name" value="MATURASE K"/>
    <property type="match status" value="1"/>
</dbReference>
<dbReference type="PANTHER" id="PTHR34811:SF1">
    <property type="entry name" value="MATURASE K"/>
    <property type="match status" value="1"/>
</dbReference>
<dbReference type="Pfam" id="PF01348">
    <property type="entry name" value="Intron_maturas2"/>
    <property type="match status" value="1"/>
</dbReference>
<dbReference type="Pfam" id="PF01824">
    <property type="entry name" value="MatK_N"/>
    <property type="match status" value="1"/>
</dbReference>
<accession>Q7I9M7</accession>
<gene>
    <name evidence="1" type="primary">matK</name>
</gene>
<sequence length="508" mass="60181">MSEIQRYLQLEISQQQNFLYPLIFQEYIYAFAHDRSFSKSILLENTGYENKFSLLIVKRLITRMYQQNPFIIFPNDSTQNQFFGHNKNFYSPLISEGFAVIVEIPFFIPLIPSLERKKTKIVKSKNLRSIHSIFPFLEDSFSHLNFVLDILISHSVHAEILVQTLRYWVKDASSLHLIRFLLNEYCNWNSFFILKKGSFCFSKRNQRLFLFLYNSHVWEYESIFFFLRNQSSHLESTYSRVLLERISLYGKIEYFVNVFGKVKDFQVNLWLVKDPCMHYVRYQRKSILASRGTSIFITKWKCFLVTFWQWHFSLWFHPRRIYINQLSKTLLEIWGYLSSVQINPSVVRSQILENSFLITNAIKKLDMLVPIIPLIASLANTKFCNVLGHPISKPIRADLSDSHIIGRFGRICRNLSHYHSGSSKKKSLYRIKYILRLSCARTLARKHKSTVRTFLKKSGSKLLEEFLMSEEDVLFLTFPKALSIFGVVYKSRIWYLDILCISDLVNYK</sequence>
<reference key="1">
    <citation type="journal article" date="2002" name="Syst. Bot.">
        <title>A phylogenetic and biogeographic analysis of the Cheloneae (Scrophulariaceae) based on ITS and matK sequence data.</title>
        <authorList>
            <person name="Wolfe A.D."/>
            <person name="Datwyler S.L."/>
            <person name="Randle C.P."/>
        </authorList>
        <dbReference type="AGRICOLA" id="IND23289696"/>
    </citation>
    <scope>NUCLEOTIDE SEQUENCE [GENOMIC DNA]</scope>
</reference>
<protein>
    <recommendedName>
        <fullName evidence="1">Maturase K</fullName>
    </recommendedName>
    <alternativeName>
        <fullName evidence="1">Intron maturase</fullName>
    </alternativeName>
</protein>
<organism>
    <name type="scientific">Collinsia heterophylla</name>
    <name type="common">Purple Chinese houses</name>
    <name type="synonym">Collinsia bicolor</name>
    <dbReference type="NCBI Taxonomy" id="69908"/>
    <lineage>
        <taxon>Eukaryota</taxon>
        <taxon>Viridiplantae</taxon>
        <taxon>Streptophyta</taxon>
        <taxon>Embryophyta</taxon>
        <taxon>Tracheophyta</taxon>
        <taxon>Spermatophyta</taxon>
        <taxon>Magnoliopsida</taxon>
        <taxon>eudicotyledons</taxon>
        <taxon>Gunneridae</taxon>
        <taxon>Pentapetalae</taxon>
        <taxon>asterids</taxon>
        <taxon>lamiids</taxon>
        <taxon>Lamiales</taxon>
        <taxon>Plantaginaceae</taxon>
        <taxon>Cheloneae</taxon>
        <taxon>Collinsia</taxon>
    </lineage>
</organism>
<feature type="chain" id="PRO_0000143340" description="Maturase K">
    <location>
        <begin position="1"/>
        <end position="508"/>
    </location>
</feature>
<geneLocation type="chloroplast"/>
<proteinExistence type="inferred from homology"/>
<keyword id="KW-0150">Chloroplast</keyword>
<keyword id="KW-0507">mRNA processing</keyword>
<keyword id="KW-0934">Plastid</keyword>
<keyword id="KW-0694">RNA-binding</keyword>
<keyword id="KW-0819">tRNA processing</keyword>
<comment type="function">
    <text evidence="1">Usually encoded in the trnK tRNA gene intron. Probably assists in splicing its own and other chloroplast group II introns.</text>
</comment>
<comment type="subcellular location">
    <subcellularLocation>
        <location>Plastid</location>
        <location>Chloroplast</location>
    </subcellularLocation>
</comment>
<comment type="similarity">
    <text evidence="1">Belongs to the intron maturase 2 family. MatK subfamily.</text>
</comment>
<name>MATK_COLHT</name>
<evidence type="ECO:0000255" key="1">
    <source>
        <dbReference type="HAMAP-Rule" id="MF_01390"/>
    </source>
</evidence>